<dbReference type="EC" id="2.6.1.9" evidence="1"/>
<dbReference type="EMBL" id="AE004437">
    <property type="protein sequence ID" value="AAG19443.1"/>
    <property type="status" value="ALT_INIT"/>
    <property type="molecule type" value="Genomic_DNA"/>
</dbReference>
<dbReference type="PIR" id="G84259">
    <property type="entry name" value="G84259"/>
</dbReference>
<dbReference type="RefSeq" id="WP_012289267.1">
    <property type="nucleotide sequence ID" value="NC_002607.1"/>
</dbReference>
<dbReference type="SMR" id="Q9HQS0"/>
<dbReference type="FunCoup" id="Q9HQS0">
    <property type="interactions" value="72"/>
</dbReference>
<dbReference type="STRING" id="64091.VNG_1033G"/>
<dbReference type="PaxDb" id="64091-VNG_1033G"/>
<dbReference type="GeneID" id="68693833"/>
<dbReference type="KEGG" id="hal:VNG_1033G"/>
<dbReference type="PATRIC" id="fig|64091.14.peg.790"/>
<dbReference type="HOGENOM" id="CLU_017584_3_3_2"/>
<dbReference type="InParanoid" id="Q9HQS0"/>
<dbReference type="OrthoDB" id="9929at2157"/>
<dbReference type="PhylomeDB" id="Q9HQS0"/>
<dbReference type="UniPathway" id="UPA00031">
    <property type="reaction ID" value="UER00012"/>
</dbReference>
<dbReference type="Proteomes" id="UP000000554">
    <property type="component" value="Chromosome"/>
</dbReference>
<dbReference type="GO" id="GO:0004400">
    <property type="term" value="F:histidinol-phosphate transaminase activity"/>
    <property type="evidence" value="ECO:0007669"/>
    <property type="project" value="UniProtKB-UniRule"/>
</dbReference>
<dbReference type="GO" id="GO:0030170">
    <property type="term" value="F:pyridoxal phosphate binding"/>
    <property type="evidence" value="ECO:0007669"/>
    <property type="project" value="InterPro"/>
</dbReference>
<dbReference type="GO" id="GO:0000105">
    <property type="term" value="P:L-histidine biosynthetic process"/>
    <property type="evidence" value="ECO:0007669"/>
    <property type="project" value="UniProtKB-UniRule"/>
</dbReference>
<dbReference type="CDD" id="cd00609">
    <property type="entry name" value="AAT_like"/>
    <property type="match status" value="1"/>
</dbReference>
<dbReference type="Gene3D" id="3.90.1150.10">
    <property type="entry name" value="Aspartate Aminotransferase, domain 1"/>
    <property type="match status" value="1"/>
</dbReference>
<dbReference type="Gene3D" id="3.40.640.10">
    <property type="entry name" value="Type I PLP-dependent aspartate aminotransferase-like (Major domain)"/>
    <property type="match status" value="1"/>
</dbReference>
<dbReference type="HAMAP" id="MF_01023">
    <property type="entry name" value="HisC_aminotrans_2"/>
    <property type="match status" value="1"/>
</dbReference>
<dbReference type="InterPro" id="IPR001917">
    <property type="entry name" value="Aminotrans_II_pyridoxalP_BS"/>
</dbReference>
<dbReference type="InterPro" id="IPR004839">
    <property type="entry name" value="Aminotransferase_I/II_large"/>
</dbReference>
<dbReference type="InterPro" id="IPR005861">
    <property type="entry name" value="HisP_aminotrans"/>
</dbReference>
<dbReference type="InterPro" id="IPR015424">
    <property type="entry name" value="PyrdxlP-dep_Trfase"/>
</dbReference>
<dbReference type="InterPro" id="IPR015421">
    <property type="entry name" value="PyrdxlP-dep_Trfase_major"/>
</dbReference>
<dbReference type="InterPro" id="IPR015422">
    <property type="entry name" value="PyrdxlP-dep_Trfase_small"/>
</dbReference>
<dbReference type="NCBIfam" id="TIGR01141">
    <property type="entry name" value="hisC"/>
    <property type="match status" value="1"/>
</dbReference>
<dbReference type="PANTHER" id="PTHR42885:SF2">
    <property type="entry name" value="HISTIDINOL-PHOSPHATE AMINOTRANSFERASE"/>
    <property type="match status" value="1"/>
</dbReference>
<dbReference type="PANTHER" id="PTHR42885">
    <property type="entry name" value="HISTIDINOL-PHOSPHATE AMINOTRANSFERASE-RELATED"/>
    <property type="match status" value="1"/>
</dbReference>
<dbReference type="Pfam" id="PF00155">
    <property type="entry name" value="Aminotran_1_2"/>
    <property type="match status" value="1"/>
</dbReference>
<dbReference type="SUPFAM" id="SSF53383">
    <property type="entry name" value="PLP-dependent transferases"/>
    <property type="match status" value="1"/>
</dbReference>
<dbReference type="PROSITE" id="PS00599">
    <property type="entry name" value="AA_TRANSFER_CLASS_2"/>
    <property type="match status" value="1"/>
</dbReference>
<feature type="chain" id="PRO_0000153493" description="Histidinol-phosphate aminotransferase">
    <location>
        <begin position="1"/>
        <end position="366"/>
    </location>
</feature>
<feature type="modified residue" description="N6-(pyridoxal phosphate)lysine" evidence="1">
    <location>
        <position position="231"/>
    </location>
</feature>
<keyword id="KW-0028">Amino-acid biosynthesis</keyword>
<keyword id="KW-0032">Aminotransferase</keyword>
<keyword id="KW-0368">Histidine biosynthesis</keyword>
<keyword id="KW-0663">Pyridoxal phosphate</keyword>
<keyword id="KW-1185">Reference proteome</keyword>
<keyword id="KW-0808">Transferase</keyword>
<gene>
    <name evidence="1" type="primary">hisC</name>
    <name type="ordered locus">VNG_1033G</name>
</gene>
<proteinExistence type="inferred from homology"/>
<organism>
    <name type="scientific">Halobacterium salinarum (strain ATCC 700922 / JCM 11081 / NRC-1)</name>
    <name type="common">Halobacterium halobium</name>
    <dbReference type="NCBI Taxonomy" id="64091"/>
    <lineage>
        <taxon>Archaea</taxon>
        <taxon>Methanobacteriati</taxon>
        <taxon>Methanobacteriota</taxon>
        <taxon>Stenosarchaea group</taxon>
        <taxon>Halobacteria</taxon>
        <taxon>Halobacteriales</taxon>
        <taxon>Halobacteriaceae</taxon>
        <taxon>Halobacterium</taxon>
        <taxon>Halobacterium salinarum NRC-34001</taxon>
    </lineage>
</organism>
<name>HIS8_HALSA</name>
<comment type="catalytic activity">
    <reaction evidence="1">
        <text>L-histidinol phosphate + 2-oxoglutarate = 3-(imidazol-4-yl)-2-oxopropyl phosphate + L-glutamate</text>
        <dbReference type="Rhea" id="RHEA:23744"/>
        <dbReference type="ChEBI" id="CHEBI:16810"/>
        <dbReference type="ChEBI" id="CHEBI:29985"/>
        <dbReference type="ChEBI" id="CHEBI:57766"/>
        <dbReference type="ChEBI" id="CHEBI:57980"/>
        <dbReference type="EC" id="2.6.1.9"/>
    </reaction>
</comment>
<comment type="cofactor">
    <cofactor evidence="1">
        <name>pyridoxal 5'-phosphate</name>
        <dbReference type="ChEBI" id="CHEBI:597326"/>
    </cofactor>
</comment>
<comment type="pathway">
    <text evidence="1">Amino-acid biosynthesis; L-histidine biosynthesis; L-histidine from 5-phospho-alpha-D-ribose 1-diphosphate: step 7/9.</text>
</comment>
<comment type="similarity">
    <text evidence="1">Belongs to the class-II pyridoxal-phosphate-dependent aminotransferase family. Histidinol-phosphate aminotransferase subfamily.</text>
</comment>
<comment type="sequence caution" evidence="2">
    <conflict type="erroneous initiation">
        <sequence resource="EMBL-CDS" id="AAG19443"/>
    </conflict>
</comment>
<accession>Q9HQS0</accession>
<sequence length="366" mass="39269">MELRDLSDHVEYRAGRGIEEVARELGRDPSEFVKLSSNENPHGPSPKATIAIREAATGVHRYPKAVHADLTGALADRWDVGDDQVWVANGGDGALDYLARATLDPGDSVLVPSPGFTYYGMSARFHHGNVAEYDVAEGADGFEMTADAVVDAYDGERVVYLTTPHNPTGARFTLDEIVAVADRTDEDTLVLVDEAYGEFTETPSAVTLFDGQPAGGHAPRDDIAVLRTFSKAYGLAGIRLGYAVVPDSWADAYARVQTPFAASVIACQAGVAALDDDDHVEATTDSVAWGRDYIHDELAARTYESHGNFVLANVGDAGRVAEAAKREGVLVRDCTSFGLPEHVRITIGTRSETERAVAVLNEVCDT</sequence>
<protein>
    <recommendedName>
        <fullName evidence="1">Histidinol-phosphate aminotransferase</fullName>
        <ecNumber evidence="1">2.6.1.9</ecNumber>
    </recommendedName>
    <alternativeName>
        <fullName evidence="1">Imidazole acetol-phosphate transaminase</fullName>
    </alternativeName>
</protein>
<reference key="1">
    <citation type="journal article" date="2000" name="Proc. Natl. Acad. Sci. U.S.A.">
        <title>Genome sequence of Halobacterium species NRC-1.</title>
        <authorList>
            <person name="Ng W.V."/>
            <person name="Kennedy S.P."/>
            <person name="Mahairas G.G."/>
            <person name="Berquist B."/>
            <person name="Pan M."/>
            <person name="Shukla H.D."/>
            <person name="Lasky S.R."/>
            <person name="Baliga N.S."/>
            <person name="Thorsson V."/>
            <person name="Sbrogna J."/>
            <person name="Swartzell S."/>
            <person name="Weir D."/>
            <person name="Hall J."/>
            <person name="Dahl T.A."/>
            <person name="Welti R."/>
            <person name="Goo Y.A."/>
            <person name="Leithauser B."/>
            <person name="Keller K."/>
            <person name="Cruz R."/>
            <person name="Danson M.J."/>
            <person name="Hough D.W."/>
            <person name="Maddocks D.G."/>
            <person name="Jablonski P.E."/>
            <person name="Krebs M.P."/>
            <person name="Angevine C.M."/>
            <person name="Dale H."/>
            <person name="Isenbarger T.A."/>
            <person name="Peck R.F."/>
            <person name="Pohlschroder M."/>
            <person name="Spudich J.L."/>
            <person name="Jung K.-H."/>
            <person name="Alam M."/>
            <person name="Freitas T."/>
            <person name="Hou S."/>
            <person name="Daniels C.J."/>
            <person name="Dennis P.P."/>
            <person name="Omer A.D."/>
            <person name="Ebhardt H."/>
            <person name="Lowe T.M."/>
            <person name="Liang P."/>
            <person name="Riley M."/>
            <person name="Hood L."/>
            <person name="DasSarma S."/>
        </authorList>
    </citation>
    <scope>NUCLEOTIDE SEQUENCE [LARGE SCALE GENOMIC DNA]</scope>
    <source>
        <strain>ATCC 700922 / JCM 11081 / NRC-1</strain>
    </source>
</reference>
<evidence type="ECO:0000255" key="1">
    <source>
        <dbReference type="HAMAP-Rule" id="MF_01023"/>
    </source>
</evidence>
<evidence type="ECO:0000305" key="2"/>